<feature type="signal peptide" evidence="2">
    <location>
        <begin position="1"/>
        <end position="19"/>
    </location>
</feature>
<feature type="chain" id="PRO_0000436165" description="G-type lectin S-receptor-like serine/threonine-protein kinase LECRK1" evidence="2">
    <location>
        <begin position="20"/>
        <end position="813"/>
    </location>
</feature>
<feature type="topological domain" description="Extracellular" evidence="11">
    <location>
        <begin position="20"/>
        <end position="466"/>
    </location>
</feature>
<feature type="transmembrane region" description="Helical" evidence="2">
    <location>
        <begin position="467"/>
        <end position="487"/>
    </location>
</feature>
<feature type="topological domain" description="Cytoplasmic" evidence="11">
    <location>
        <begin position="488"/>
        <end position="813"/>
    </location>
</feature>
<feature type="domain" description="Bulb-type lectin" evidence="3">
    <location>
        <begin position="22"/>
        <end position="149"/>
    </location>
</feature>
<feature type="domain" description="EGF-like; atypical" evidence="11">
    <location>
        <begin position="293"/>
        <end position="346"/>
    </location>
</feature>
<feature type="domain" description="PAN" evidence="6">
    <location>
        <begin position="354"/>
        <end position="433"/>
    </location>
</feature>
<feature type="domain" description="Protein kinase" evidence="5">
    <location>
        <begin position="523"/>
        <end position="797"/>
    </location>
</feature>
<feature type="active site" description="Proton acceptor" evidence="5">
    <location>
        <position position="647"/>
    </location>
</feature>
<feature type="binding site" evidence="5">
    <location>
        <begin position="529"/>
        <end position="537"/>
    </location>
    <ligand>
        <name>ATP</name>
        <dbReference type="ChEBI" id="CHEBI:30616"/>
    </ligand>
</feature>
<feature type="binding site" evidence="5">
    <location>
        <position position="553"/>
    </location>
    <ligand>
        <name>ATP</name>
        <dbReference type="ChEBI" id="CHEBI:30616"/>
    </ligand>
</feature>
<feature type="glycosylation site" description="N-linked (GlcNAc...) asparagine" evidence="7">
    <location>
        <position position="24"/>
    </location>
</feature>
<feature type="glycosylation site" description="N-linked (GlcNAc...) asparagine" evidence="7">
    <location>
        <position position="57"/>
    </location>
</feature>
<feature type="glycosylation site" description="N-linked (GlcNAc...) asparagine" evidence="7">
    <location>
        <position position="164"/>
    </location>
</feature>
<feature type="glycosylation site" description="N-linked (GlcNAc...) asparagine" evidence="7">
    <location>
        <position position="168"/>
    </location>
</feature>
<feature type="glycosylation site" description="N-linked (GlcNAc...) asparagine" evidence="7">
    <location>
        <position position="219"/>
    </location>
</feature>
<feature type="glycosylation site" description="N-linked (GlcNAc...) asparagine" evidence="7">
    <location>
        <position position="242"/>
    </location>
</feature>
<feature type="glycosylation site" description="N-linked (GlcNAc...) asparagine" evidence="7">
    <location>
        <position position="407"/>
    </location>
</feature>
<feature type="glycosylation site" description="N-linked (GlcNAc...) asparagine" evidence="7">
    <location>
        <position position="441"/>
    </location>
</feature>
<feature type="disulfide bond" evidence="4">
    <location>
        <begin position="297"/>
        <end position="315"/>
    </location>
</feature>
<feature type="disulfide bond" evidence="4">
    <location>
        <begin position="309"/>
        <end position="327"/>
    </location>
</feature>
<feature type="disulfide bond" evidence="4">
    <location>
        <begin position="329"/>
        <end position="345"/>
    </location>
</feature>
<feature type="disulfide bond" evidence="6">
    <location>
        <begin position="391"/>
        <end position="413"/>
    </location>
</feature>
<feature type="disulfide bond" evidence="6">
    <location>
        <begin position="395"/>
        <end position="401"/>
    </location>
</feature>
<feature type="sequence conflict" description="In Ref. 1; AIE56229." evidence="11" ref="1">
    <original>D</original>
    <variation>N</variation>
    <location>
        <position position="72"/>
    </location>
</feature>
<feature type="sequence conflict" description="In Ref. 1; AIE56229." evidence="11" ref="1">
    <original>N</original>
    <variation>D</variation>
    <location>
        <position position="178"/>
    </location>
</feature>
<sequence>MVALLLFPMLLQLLSPTCAQTQKNITLGSTLAPQSPASSWLSPSGDFAFGFRPVEGNTSFYLIAVWFNKISDKTVVWYAKNTDQDPSIVEVPSDSFLQLTNDGALSLKDRSGQEGWNPQVTSVAYASMRDTGNFVLLGADGTTKWQTFDMPSDTILPTQVIPCNKTRNKSLRARLDINDYSSGRFLLDVQTDGNLALYLVAVPSGSKYQQYWSTDTTGNGSELVFSETGKVYFALTDGTQINISSGAGIGSMADYFHRATLDPDGVFRQYVYPKKANAGILGGETWTAVSMQPQNICHAIVSDVGSGVCGFNSYCTFDGTRNQIASCQCPPWYKFFDEQKKYKGCKQDFQPHSCDLDEATALAQFELRPIYGVDWPLSDYEKYEPIGQDDCGRLCVIDCFCAMAVYNQSTSTCWKKKLPLSNGNMADYVQRTVLLKVPSSNSSQSMISTSSNKWKRNRKHWVLGSSLILGTSILVNFALISIFLFGTYCRIATKKNIPLSQASSKSQLPLKTFTYKELEKATAGFHEILGAGASGVVYKGQLEDELKTNIAVKKIDKLQPETEKEFMVEVETIGQTFHKNLVRLLGFCNEGAERLLVYEFMTNGPLNRLLFDNSRPHWNTRVHIALGVARGLLYLHDECSKQIIHCDIKPQNILLDDNLVAKISDFGLAKLLLTNQTRTNTGIRGTRGYVAPEWFKNIGISTKVDVYSFGVILLELVCCRRNVELEVVDEEQTIVTYWANDCYRSGRIDLLVEGDDEAIYNIKKVERFVTVALWCLQEDPSMRPNMLKVTQMLDGAVAIPSPPDPCSFISSLP</sequence>
<reference key="1">
    <citation type="journal article" date="2015" name="Nat. Biotechnol.">
        <title>A gene cluster encoding lectin receptor kinases confers broad-spectrum and durable insect resistance in rice.</title>
        <authorList>
            <person name="Liu Y."/>
            <person name="Wu H."/>
            <person name="Chen H."/>
            <person name="Liu Y."/>
            <person name="He J."/>
            <person name="Kang H."/>
            <person name="Sun Z."/>
            <person name="Pan G."/>
            <person name="Wang Q."/>
            <person name="Hu J."/>
            <person name="Zhou F."/>
            <person name="Zhou K."/>
            <person name="Zheng X."/>
            <person name="Ren Y."/>
            <person name="Chen L."/>
            <person name="Wang Y."/>
            <person name="Zhao Z."/>
            <person name="Lin Q."/>
            <person name="Wu F."/>
            <person name="Zhang X."/>
            <person name="Guo X."/>
            <person name="Cheng X."/>
            <person name="Jiang L."/>
            <person name="Wu C."/>
            <person name="Wang H."/>
            <person name="Wan J."/>
        </authorList>
    </citation>
    <scope>NUCLEOTIDE SEQUENCE [MRNA]</scope>
    <scope>FUNCTION</scope>
</reference>
<reference key="2">
    <citation type="journal article" date="2002" name="Nature">
        <title>Sequence and analysis of rice chromosome 4.</title>
        <authorList>
            <person name="Feng Q."/>
            <person name="Zhang Y."/>
            <person name="Hao P."/>
            <person name="Wang S."/>
            <person name="Fu G."/>
            <person name="Huang Y."/>
            <person name="Li Y."/>
            <person name="Zhu J."/>
            <person name="Liu Y."/>
            <person name="Hu X."/>
            <person name="Jia P."/>
            <person name="Zhang Y."/>
            <person name="Zhao Q."/>
            <person name="Ying K."/>
            <person name="Yu S."/>
            <person name="Tang Y."/>
            <person name="Weng Q."/>
            <person name="Zhang L."/>
            <person name="Lu Y."/>
            <person name="Mu J."/>
            <person name="Lu Y."/>
            <person name="Zhang L.S."/>
            <person name="Yu Z."/>
            <person name="Fan D."/>
            <person name="Liu X."/>
            <person name="Lu T."/>
            <person name="Li C."/>
            <person name="Wu Y."/>
            <person name="Sun T."/>
            <person name="Lei H."/>
            <person name="Li T."/>
            <person name="Hu H."/>
            <person name="Guan J."/>
            <person name="Wu M."/>
            <person name="Zhang R."/>
            <person name="Zhou B."/>
            <person name="Chen Z."/>
            <person name="Chen L."/>
            <person name="Jin Z."/>
            <person name="Wang R."/>
            <person name="Yin H."/>
            <person name="Cai Z."/>
            <person name="Ren S."/>
            <person name="Lv G."/>
            <person name="Gu W."/>
            <person name="Zhu G."/>
            <person name="Tu Y."/>
            <person name="Jia J."/>
            <person name="Zhang Y."/>
            <person name="Chen J."/>
            <person name="Kang H."/>
            <person name="Chen X."/>
            <person name="Shao C."/>
            <person name="Sun Y."/>
            <person name="Hu Q."/>
            <person name="Zhang X."/>
            <person name="Zhang W."/>
            <person name="Wang L."/>
            <person name="Ding C."/>
            <person name="Sheng H."/>
            <person name="Gu J."/>
            <person name="Chen S."/>
            <person name="Ni L."/>
            <person name="Zhu F."/>
            <person name="Chen W."/>
            <person name="Lan L."/>
            <person name="Lai Y."/>
            <person name="Cheng Z."/>
            <person name="Gu M."/>
            <person name="Jiang J."/>
            <person name="Li J."/>
            <person name="Hong G."/>
            <person name="Xue Y."/>
            <person name="Han B."/>
        </authorList>
    </citation>
    <scope>NUCLEOTIDE SEQUENCE [LARGE SCALE GENOMIC DNA]</scope>
    <source>
        <strain>cv. Nipponbare</strain>
    </source>
</reference>
<reference key="3">
    <citation type="journal article" date="2005" name="Nature">
        <title>The map-based sequence of the rice genome.</title>
        <authorList>
            <consortium name="International rice genome sequencing project (IRGSP)"/>
        </authorList>
    </citation>
    <scope>NUCLEOTIDE SEQUENCE [LARGE SCALE GENOMIC DNA]</scope>
    <source>
        <strain>cv. Nipponbare</strain>
    </source>
</reference>
<reference key="4">
    <citation type="journal article" date="2008" name="Nucleic Acids Res.">
        <title>The rice annotation project database (RAP-DB): 2008 update.</title>
        <authorList>
            <consortium name="The rice annotation project (RAP)"/>
        </authorList>
    </citation>
    <scope>GENOME REANNOTATION</scope>
    <source>
        <strain>cv. Nipponbare</strain>
    </source>
</reference>
<reference key="5">
    <citation type="journal article" date="2013" name="Rice">
        <title>Improvement of the Oryza sativa Nipponbare reference genome using next generation sequence and optical map data.</title>
        <authorList>
            <person name="Kawahara Y."/>
            <person name="de la Bastide M."/>
            <person name="Hamilton J.P."/>
            <person name="Kanamori H."/>
            <person name="McCombie W.R."/>
            <person name="Ouyang S."/>
            <person name="Schwartz D.C."/>
            <person name="Tanaka T."/>
            <person name="Wu J."/>
            <person name="Zhou S."/>
            <person name="Childs K.L."/>
            <person name="Davidson R.M."/>
            <person name="Lin H."/>
            <person name="Quesada-Ocampo L."/>
            <person name="Vaillancourt B."/>
            <person name="Sakai H."/>
            <person name="Lee S.S."/>
            <person name="Kim J."/>
            <person name="Numa H."/>
            <person name="Itoh T."/>
            <person name="Buell C.R."/>
            <person name="Matsumoto T."/>
        </authorList>
    </citation>
    <scope>GENOME REANNOTATION</scope>
    <source>
        <strain>cv. Nipponbare</strain>
    </source>
</reference>
<reference key="6">
    <citation type="journal article" date="2005" name="PLoS Biol.">
        <title>The genomes of Oryza sativa: a history of duplications.</title>
        <authorList>
            <person name="Yu J."/>
            <person name="Wang J."/>
            <person name="Lin W."/>
            <person name="Li S."/>
            <person name="Li H."/>
            <person name="Zhou J."/>
            <person name="Ni P."/>
            <person name="Dong W."/>
            <person name="Hu S."/>
            <person name="Zeng C."/>
            <person name="Zhang J."/>
            <person name="Zhang Y."/>
            <person name="Li R."/>
            <person name="Xu Z."/>
            <person name="Li S."/>
            <person name="Li X."/>
            <person name="Zheng H."/>
            <person name="Cong L."/>
            <person name="Lin L."/>
            <person name="Yin J."/>
            <person name="Geng J."/>
            <person name="Li G."/>
            <person name="Shi J."/>
            <person name="Liu J."/>
            <person name="Lv H."/>
            <person name="Li J."/>
            <person name="Wang J."/>
            <person name="Deng Y."/>
            <person name="Ran L."/>
            <person name="Shi X."/>
            <person name="Wang X."/>
            <person name="Wu Q."/>
            <person name="Li C."/>
            <person name="Ren X."/>
            <person name="Wang J."/>
            <person name="Wang X."/>
            <person name="Li D."/>
            <person name="Liu D."/>
            <person name="Zhang X."/>
            <person name="Ji Z."/>
            <person name="Zhao W."/>
            <person name="Sun Y."/>
            <person name="Zhang Z."/>
            <person name="Bao J."/>
            <person name="Han Y."/>
            <person name="Dong L."/>
            <person name="Ji J."/>
            <person name="Chen P."/>
            <person name="Wu S."/>
            <person name="Liu J."/>
            <person name="Xiao Y."/>
            <person name="Bu D."/>
            <person name="Tan J."/>
            <person name="Yang L."/>
            <person name="Ye C."/>
            <person name="Zhang J."/>
            <person name="Xu J."/>
            <person name="Zhou Y."/>
            <person name="Yu Y."/>
            <person name="Zhang B."/>
            <person name="Zhuang S."/>
            <person name="Wei H."/>
            <person name="Liu B."/>
            <person name="Lei M."/>
            <person name="Yu H."/>
            <person name="Li Y."/>
            <person name="Xu H."/>
            <person name="Wei S."/>
            <person name="He X."/>
            <person name="Fang L."/>
            <person name="Zhang Z."/>
            <person name="Zhang Y."/>
            <person name="Huang X."/>
            <person name="Su Z."/>
            <person name="Tong W."/>
            <person name="Li J."/>
            <person name="Tong Z."/>
            <person name="Li S."/>
            <person name="Ye J."/>
            <person name="Wang L."/>
            <person name="Fang L."/>
            <person name="Lei T."/>
            <person name="Chen C.-S."/>
            <person name="Chen H.-C."/>
            <person name="Xu Z."/>
            <person name="Li H."/>
            <person name="Huang H."/>
            <person name="Zhang F."/>
            <person name="Xu H."/>
            <person name="Li N."/>
            <person name="Zhao C."/>
            <person name="Li S."/>
            <person name="Dong L."/>
            <person name="Huang Y."/>
            <person name="Li L."/>
            <person name="Xi Y."/>
            <person name="Qi Q."/>
            <person name="Li W."/>
            <person name="Zhang B."/>
            <person name="Hu W."/>
            <person name="Zhang Y."/>
            <person name="Tian X."/>
            <person name="Jiao Y."/>
            <person name="Liang X."/>
            <person name="Jin J."/>
            <person name="Gao L."/>
            <person name="Zheng W."/>
            <person name="Hao B."/>
            <person name="Liu S.-M."/>
            <person name="Wang W."/>
            <person name="Yuan L."/>
            <person name="Cao M."/>
            <person name="McDermott J."/>
            <person name="Samudrala R."/>
            <person name="Wang J."/>
            <person name="Wong G.K.-S."/>
            <person name="Yang H."/>
        </authorList>
    </citation>
    <scope>NUCLEOTIDE SEQUENCE [LARGE SCALE GENOMIC DNA]</scope>
    <source>
        <strain>cv. Nipponbare</strain>
    </source>
</reference>
<reference key="7">
    <citation type="journal article" date="2008" name="Mol. Plant">
        <title>The receptor-like cytoplasmic kinase (OsRLCK) gene family in rice: organization, phylogenetic relationship, and expression during development and stress.</title>
        <authorList>
            <person name="Vij S."/>
            <person name="Giri J."/>
            <person name="Dansana P.K."/>
            <person name="Kapoor S."/>
            <person name="Tyagi A.K."/>
        </authorList>
    </citation>
    <scope>GENE FAMILY</scope>
</reference>
<proteinExistence type="evidence at transcript level"/>
<accession>Q7FAZ3</accession>
<accession>A0A075F7F4</accession>
<accession>Q0JEU8</accession>
<evidence type="ECO:0000250" key="1">
    <source>
        <dbReference type="UniProtKB" id="A0A075F7E9"/>
    </source>
</evidence>
<evidence type="ECO:0000255" key="2"/>
<evidence type="ECO:0000255" key="3">
    <source>
        <dbReference type="PROSITE-ProRule" id="PRU00038"/>
    </source>
</evidence>
<evidence type="ECO:0000255" key="4">
    <source>
        <dbReference type="PROSITE-ProRule" id="PRU00076"/>
    </source>
</evidence>
<evidence type="ECO:0000255" key="5">
    <source>
        <dbReference type="PROSITE-ProRule" id="PRU00159"/>
    </source>
</evidence>
<evidence type="ECO:0000255" key="6">
    <source>
        <dbReference type="PROSITE-ProRule" id="PRU00315"/>
    </source>
</evidence>
<evidence type="ECO:0000255" key="7">
    <source>
        <dbReference type="PROSITE-ProRule" id="PRU00498"/>
    </source>
</evidence>
<evidence type="ECO:0000269" key="8">
    <source>
    </source>
</evidence>
<evidence type="ECO:0000303" key="9">
    <source>
    </source>
</evidence>
<evidence type="ECO:0000303" key="10">
    <source>
    </source>
</evidence>
<evidence type="ECO:0000305" key="11"/>
<evidence type="ECO:0000312" key="12">
    <source>
        <dbReference type="EMBL" id="BAS88070.1"/>
    </source>
</evidence>
<evidence type="ECO:0000312" key="13">
    <source>
        <dbReference type="EMBL" id="CAE03338.2"/>
    </source>
</evidence>
<evidence type="ECO:0000312" key="14">
    <source>
        <dbReference type="EMBL" id="EEE60504.1"/>
    </source>
</evidence>
<protein>
    <recommendedName>
        <fullName evidence="11">G-type lectin S-receptor-like serine/threonine-protein kinase LECRK1</fullName>
        <shortName evidence="10">OsLecRK1</shortName>
        <ecNumber evidence="11">2.7.11.1</ecNumber>
    </recommendedName>
    <alternativeName>
        <fullName evidence="9">OsRLCK134</fullName>
    </alternativeName>
</protein>
<keyword id="KW-0067">ATP-binding</keyword>
<keyword id="KW-1015">Disulfide bond</keyword>
<keyword id="KW-0245">EGF-like domain</keyword>
<keyword id="KW-0325">Glycoprotein</keyword>
<keyword id="KW-0418">Kinase</keyword>
<keyword id="KW-0430">Lectin</keyword>
<keyword id="KW-0472">Membrane</keyword>
<keyword id="KW-0547">Nucleotide-binding</keyword>
<keyword id="KW-0611">Plant defense</keyword>
<keyword id="KW-0675">Receptor</keyword>
<keyword id="KW-1185">Reference proteome</keyword>
<keyword id="KW-0723">Serine/threonine-protein kinase</keyword>
<keyword id="KW-0732">Signal</keyword>
<keyword id="KW-0808">Transferase</keyword>
<keyword id="KW-0812">Transmembrane</keyword>
<keyword id="KW-1133">Transmembrane helix</keyword>
<name>LERK1_ORYSJ</name>
<dbReference type="EC" id="2.7.11.1" evidence="11"/>
<dbReference type="EMBL" id="KF748964">
    <property type="protein sequence ID" value="AIE56229.1"/>
    <property type="molecule type" value="Genomic_DNA"/>
</dbReference>
<dbReference type="EMBL" id="AL606606">
    <property type="protein sequence ID" value="CAE03338.2"/>
    <property type="molecule type" value="Genomic_DNA"/>
</dbReference>
<dbReference type="EMBL" id="AP008210">
    <property type="protein sequence ID" value="BAF14139.2"/>
    <property type="status" value="ALT_SEQ"/>
    <property type="molecule type" value="Genomic_DNA"/>
</dbReference>
<dbReference type="EMBL" id="AP014960">
    <property type="protein sequence ID" value="BAS88070.1"/>
    <property type="molecule type" value="Genomic_DNA"/>
</dbReference>
<dbReference type="EMBL" id="CM000141">
    <property type="protein sequence ID" value="EEE60504.1"/>
    <property type="molecule type" value="Genomic_DNA"/>
</dbReference>
<dbReference type="RefSeq" id="XP_015633598.1">
    <property type="nucleotide sequence ID" value="XM_015778112.1"/>
</dbReference>
<dbReference type="SMR" id="Q7FAZ3"/>
<dbReference type="FunCoup" id="Q7FAZ3">
    <property type="interactions" value="1637"/>
</dbReference>
<dbReference type="STRING" id="39947.Q7FAZ3"/>
<dbReference type="GlyCosmos" id="Q7FAZ3">
    <property type="glycosylation" value="8 sites, No reported glycans"/>
</dbReference>
<dbReference type="PaxDb" id="39947-Q7FAZ3"/>
<dbReference type="EnsemblPlants" id="Os04t0201900-01">
    <property type="protein sequence ID" value="Os04t0201900-01"/>
    <property type="gene ID" value="Os04g0201900"/>
</dbReference>
<dbReference type="Gramene" id="Os04t0201900-01">
    <property type="protein sequence ID" value="Os04t0201900-01"/>
    <property type="gene ID" value="Os04g0201900"/>
</dbReference>
<dbReference type="KEGG" id="dosa:Os04g0201900"/>
<dbReference type="eggNOG" id="ENOG502QQEW">
    <property type="taxonomic scope" value="Eukaryota"/>
</dbReference>
<dbReference type="HOGENOM" id="CLU_000288_116_2_1"/>
<dbReference type="InParanoid" id="Q7FAZ3"/>
<dbReference type="OMA" id="NQTETEC"/>
<dbReference type="OrthoDB" id="1930390at2759"/>
<dbReference type="Proteomes" id="UP000000763">
    <property type="component" value="Chromosome 4"/>
</dbReference>
<dbReference type="Proteomes" id="UP000007752">
    <property type="component" value="Chromosome 4"/>
</dbReference>
<dbReference type="Proteomes" id="UP000059680">
    <property type="component" value="Chromosome 4"/>
</dbReference>
<dbReference type="GO" id="GO:0016020">
    <property type="term" value="C:membrane"/>
    <property type="evidence" value="ECO:0007669"/>
    <property type="project" value="UniProtKB-SubCell"/>
</dbReference>
<dbReference type="GO" id="GO:0005524">
    <property type="term" value="F:ATP binding"/>
    <property type="evidence" value="ECO:0007669"/>
    <property type="project" value="UniProtKB-KW"/>
</dbReference>
<dbReference type="GO" id="GO:0030246">
    <property type="term" value="F:carbohydrate binding"/>
    <property type="evidence" value="ECO:0007669"/>
    <property type="project" value="UniProtKB-KW"/>
</dbReference>
<dbReference type="GO" id="GO:0004672">
    <property type="term" value="F:protein kinase activity"/>
    <property type="evidence" value="ECO:0000318"/>
    <property type="project" value="GO_Central"/>
</dbReference>
<dbReference type="GO" id="GO:0106310">
    <property type="term" value="F:protein serine kinase activity"/>
    <property type="evidence" value="ECO:0007669"/>
    <property type="project" value="RHEA"/>
</dbReference>
<dbReference type="GO" id="GO:0004674">
    <property type="term" value="F:protein serine/threonine kinase activity"/>
    <property type="evidence" value="ECO:0007669"/>
    <property type="project" value="UniProtKB-KW"/>
</dbReference>
<dbReference type="GO" id="GO:0006952">
    <property type="term" value="P:defense response"/>
    <property type="evidence" value="ECO:0007669"/>
    <property type="project" value="UniProtKB-KW"/>
</dbReference>
<dbReference type="GO" id="GO:0051707">
    <property type="term" value="P:response to other organism"/>
    <property type="evidence" value="ECO:0007669"/>
    <property type="project" value="UniProtKB-ARBA"/>
</dbReference>
<dbReference type="CDD" id="cd01098">
    <property type="entry name" value="PAN_AP_plant"/>
    <property type="match status" value="1"/>
</dbReference>
<dbReference type="FunFam" id="1.10.510.10:FF:000237">
    <property type="entry name" value="G-type lectin S-receptor-like serine/threonine-protein kinase"/>
    <property type="match status" value="1"/>
</dbReference>
<dbReference type="FunFam" id="2.90.10.10:FF:000013">
    <property type="entry name" value="G-type lectin S-receptor-like serine/threonine-protein kinase LECRK1"/>
    <property type="match status" value="1"/>
</dbReference>
<dbReference type="FunFam" id="2.90.10.10:FF:000031">
    <property type="entry name" value="G-type lectin S-receptor-like serine/threonine-protein kinase LECRK1"/>
    <property type="match status" value="1"/>
</dbReference>
<dbReference type="FunFam" id="3.30.200.20:FF:000059">
    <property type="entry name" value="S-receptor-like serine/threonine-protein kinase"/>
    <property type="match status" value="1"/>
</dbReference>
<dbReference type="Gene3D" id="2.90.10.10">
    <property type="entry name" value="Bulb-type lectin domain"/>
    <property type="match status" value="2"/>
</dbReference>
<dbReference type="Gene3D" id="3.30.200.20">
    <property type="entry name" value="Phosphorylase Kinase, domain 1"/>
    <property type="match status" value="1"/>
</dbReference>
<dbReference type="Gene3D" id="1.10.510.10">
    <property type="entry name" value="Transferase(Phosphotransferase) domain 1"/>
    <property type="match status" value="1"/>
</dbReference>
<dbReference type="InterPro" id="IPR001480">
    <property type="entry name" value="Bulb-type_lectin_dom"/>
</dbReference>
<dbReference type="InterPro" id="IPR036426">
    <property type="entry name" value="Bulb-type_lectin_dom_sf"/>
</dbReference>
<dbReference type="InterPro" id="IPR051343">
    <property type="entry name" value="G-type_lectin_kinases/EP1-like"/>
</dbReference>
<dbReference type="InterPro" id="IPR011009">
    <property type="entry name" value="Kinase-like_dom_sf"/>
</dbReference>
<dbReference type="InterPro" id="IPR000719">
    <property type="entry name" value="Prot_kinase_dom"/>
</dbReference>
<dbReference type="InterPro" id="IPR017441">
    <property type="entry name" value="Protein_kinase_ATP_BS"/>
</dbReference>
<dbReference type="InterPro" id="IPR008271">
    <property type="entry name" value="Ser/Thr_kinase_AS"/>
</dbReference>
<dbReference type="InterPro" id="IPR024171">
    <property type="entry name" value="SRK-like_kinase"/>
</dbReference>
<dbReference type="PANTHER" id="PTHR47976">
    <property type="entry name" value="G-TYPE LECTIN S-RECEPTOR-LIKE SERINE/THREONINE-PROTEIN KINASE SD2-5"/>
    <property type="match status" value="1"/>
</dbReference>
<dbReference type="PANTHER" id="PTHR47976:SF108">
    <property type="entry name" value="G-TYPE LECTIN S-RECEPTOR-LIKE SERINE_THREONINE-PROTEIN KINASE LECRK1"/>
    <property type="match status" value="1"/>
</dbReference>
<dbReference type="Pfam" id="PF01453">
    <property type="entry name" value="B_lectin"/>
    <property type="match status" value="1"/>
</dbReference>
<dbReference type="Pfam" id="PF00069">
    <property type="entry name" value="Pkinase"/>
    <property type="match status" value="1"/>
</dbReference>
<dbReference type="PIRSF" id="PIRSF000641">
    <property type="entry name" value="SRK"/>
    <property type="match status" value="1"/>
</dbReference>
<dbReference type="SMART" id="SM00108">
    <property type="entry name" value="B_lectin"/>
    <property type="match status" value="1"/>
</dbReference>
<dbReference type="SMART" id="SM00220">
    <property type="entry name" value="S_TKc"/>
    <property type="match status" value="1"/>
</dbReference>
<dbReference type="SUPFAM" id="SSF51110">
    <property type="entry name" value="alpha-D-mannose-specific plant lectins"/>
    <property type="match status" value="1"/>
</dbReference>
<dbReference type="SUPFAM" id="SSF56112">
    <property type="entry name" value="Protein kinase-like (PK-like)"/>
    <property type="match status" value="1"/>
</dbReference>
<dbReference type="PROSITE" id="PS50927">
    <property type="entry name" value="BULB_LECTIN"/>
    <property type="match status" value="1"/>
</dbReference>
<dbReference type="PROSITE" id="PS00107">
    <property type="entry name" value="PROTEIN_KINASE_ATP"/>
    <property type="match status" value="1"/>
</dbReference>
<dbReference type="PROSITE" id="PS50011">
    <property type="entry name" value="PROTEIN_KINASE_DOM"/>
    <property type="match status" value="1"/>
</dbReference>
<dbReference type="PROSITE" id="PS00108">
    <property type="entry name" value="PROTEIN_KINASE_ST"/>
    <property type="match status" value="1"/>
</dbReference>
<organism>
    <name type="scientific">Oryza sativa subsp. japonica</name>
    <name type="common">Rice</name>
    <dbReference type="NCBI Taxonomy" id="39947"/>
    <lineage>
        <taxon>Eukaryota</taxon>
        <taxon>Viridiplantae</taxon>
        <taxon>Streptophyta</taxon>
        <taxon>Embryophyta</taxon>
        <taxon>Tracheophyta</taxon>
        <taxon>Spermatophyta</taxon>
        <taxon>Magnoliopsida</taxon>
        <taxon>Liliopsida</taxon>
        <taxon>Poales</taxon>
        <taxon>Poaceae</taxon>
        <taxon>BOP clade</taxon>
        <taxon>Oryzoideae</taxon>
        <taxon>Oryzeae</taxon>
        <taxon>Oryzinae</taxon>
        <taxon>Oryza</taxon>
        <taxon>Oryza sativa</taxon>
    </lineage>
</organism>
<comment type="function">
    <text evidence="1 8">Involved in innate immunity. Required for the expression of defense-related genes PR1A, LOX2 and CHS1 upon biotic stresses. Required for basal resistance to the fungal blast (M.grisea), bacterial blight (X.oryzae pv. oryzae, Xoo) and the herbivorous insect brown planthopper (N.lugens, BPH). May be involved in several defense signaling pathways. Involved in the promotion of seed germination. Required for the expression of alpha-amylase genes during seed germination (By similarity). Involved in resistance against the herbivorous insect brown planthopper (N.lugens, BPH). Member of the BPH3 (BPH resistance locus 3) cluster which contains LECRK1, LECRK2 and LECRK3 (PubMed:25485617).</text>
</comment>
<comment type="catalytic activity">
    <reaction evidence="11">
        <text>L-seryl-[protein] + ATP = O-phospho-L-seryl-[protein] + ADP + H(+)</text>
        <dbReference type="Rhea" id="RHEA:17989"/>
        <dbReference type="Rhea" id="RHEA-COMP:9863"/>
        <dbReference type="Rhea" id="RHEA-COMP:11604"/>
        <dbReference type="ChEBI" id="CHEBI:15378"/>
        <dbReference type="ChEBI" id="CHEBI:29999"/>
        <dbReference type="ChEBI" id="CHEBI:30616"/>
        <dbReference type="ChEBI" id="CHEBI:83421"/>
        <dbReference type="ChEBI" id="CHEBI:456216"/>
        <dbReference type="EC" id="2.7.11.1"/>
    </reaction>
</comment>
<comment type="catalytic activity">
    <reaction evidence="11">
        <text>L-threonyl-[protein] + ATP = O-phospho-L-threonyl-[protein] + ADP + H(+)</text>
        <dbReference type="Rhea" id="RHEA:46608"/>
        <dbReference type="Rhea" id="RHEA-COMP:11060"/>
        <dbReference type="Rhea" id="RHEA-COMP:11605"/>
        <dbReference type="ChEBI" id="CHEBI:15378"/>
        <dbReference type="ChEBI" id="CHEBI:30013"/>
        <dbReference type="ChEBI" id="CHEBI:30616"/>
        <dbReference type="ChEBI" id="CHEBI:61977"/>
        <dbReference type="ChEBI" id="CHEBI:456216"/>
        <dbReference type="EC" id="2.7.11.1"/>
    </reaction>
</comment>
<comment type="subcellular location">
    <subcellularLocation>
        <location evidence="2">Membrane</location>
        <topology evidence="2">Single-pass type I membrane protein</topology>
    </subcellularLocation>
</comment>
<comment type="similarity">
    <text evidence="5">Belongs to the protein kinase superfamily. Ser/Thr protein kinase family.</text>
</comment>
<comment type="sequence caution" evidence="11">
    <conflict type="erroneous gene model prediction">
        <sequence resource="EMBL-CDS" id="BAF14139"/>
    </conflict>
</comment>
<gene>
    <name evidence="10" type="primary">LECRK1</name>
    <name evidence="12" type="ordered locus">Os04g0201900</name>
    <name evidence="11" type="ordered locus">LOC_Os04g12540</name>
    <name evidence="14" type="ORF">OsJ_13804</name>
    <name evidence="13" type="ORF">OSJNBb0005B05.5</name>
</gene>